<gene>
    <name type="primary">nhr-100</name>
    <name type="ORF">C28D4.1</name>
</gene>
<protein>
    <recommendedName>
        <fullName>Nuclear hormone receptor family member nhr-100</fullName>
    </recommendedName>
</protein>
<comment type="function">
    <text>Orphan nuclear receptor.</text>
</comment>
<comment type="subcellular location">
    <subcellularLocation>
        <location evidence="1">Nucleus</location>
    </subcellularLocation>
</comment>
<comment type="similarity">
    <text evidence="3">Belongs to the nuclear hormone receptor family.</text>
</comment>
<keyword id="KW-0238">DNA-binding</keyword>
<keyword id="KW-0479">Metal-binding</keyword>
<keyword id="KW-0539">Nucleus</keyword>
<keyword id="KW-0675">Receptor</keyword>
<keyword id="KW-1185">Reference proteome</keyword>
<keyword id="KW-0804">Transcription</keyword>
<keyword id="KW-0805">Transcription regulation</keyword>
<keyword id="KW-0862">Zinc</keyword>
<keyword id="KW-0863">Zinc-finger</keyword>
<proteinExistence type="evidence at transcript level"/>
<accession>O17611</accession>
<feature type="chain" id="PRO_0000223585" description="Nuclear hormone receptor family member nhr-100">
    <location>
        <begin position="1"/>
        <end position="437"/>
    </location>
</feature>
<feature type="domain" description="NR LBD" evidence="2">
    <location>
        <begin position="141"/>
        <end position="409"/>
    </location>
</feature>
<feature type="DNA-binding region" description="Nuclear receptor" evidence="1">
    <location>
        <begin position="21"/>
        <end position="96"/>
    </location>
</feature>
<feature type="zinc finger region" description="NR C4-type" evidence="1">
    <location>
        <begin position="24"/>
        <end position="44"/>
    </location>
</feature>
<feature type="zinc finger region" description="NR C4-type" evidence="1">
    <location>
        <begin position="60"/>
        <end position="79"/>
    </location>
</feature>
<dbReference type="EMBL" id="AY305849">
    <property type="protein sequence ID" value="AAR11993.1"/>
    <property type="molecule type" value="mRNA"/>
</dbReference>
<dbReference type="EMBL" id="Z82259">
    <property type="protein sequence ID" value="CAB05126.3"/>
    <property type="molecule type" value="Genomic_DNA"/>
</dbReference>
<dbReference type="PIR" id="T19540">
    <property type="entry name" value="T19540"/>
</dbReference>
<dbReference type="RefSeq" id="NP_501731.1">
    <property type="nucleotide sequence ID" value="NM_069330.7"/>
</dbReference>
<dbReference type="SMR" id="O17611"/>
<dbReference type="BioGRID" id="42910">
    <property type="interactions" value="1"/>
</dbReference>
<dbReference type="FunCoup" id="O17611">
    <property type="interactions" value="1"/>
</dbReference>
<dbReference type="IntAct" id="O17611">
    <property type="interactions" value="1"/>
</dbReference>
<dbReference type="STRING" id="6239.C28D4.1.1"/>
<dbReference type="iPTMnet" id="O17611"/>
<dbReference type="PaxDb" id="6239-C28D4.1"/>
<dbReference type="PeptideAtlas" id="O17611"/>
<dbReference type="EnsemblMetazoa" id="C28D4.1.1">
    <property type="protein sequence ID" value="C28D4.1.1"/>
    <property type="gene ID" value="WBGene00003690"/>
</dbReference>
<dbReference type="EnsemblMetazoa" id="C28D4.1.2">
    <property type="protein sequence ID" value="C28D4.1.2"/>
    <property type="gene ID" value="WBGene00003690"/>
</dbReference>
<dbReference type="GeneID" id="177806"/>
<dbReference type="KEGG" id="cel:CELE_C28D4.1"/>
<dbReference type="UCSC" id="C28D4.1.1">
    <property type="organism name" value="c. elegans"/>
</dbReference>
<dbReference type="AGR" id="WB:WBGene00003690"/>
<dbReference type="CTD" id="177806"/>
<dbReference type="WormBase" id="C28D4.1">
    <property type="protein sequence ID" value="CE28893"/>
    <property type="gene ID" value="WBGene00003690"/>
    <property type="gene designation" value="nhr-100"/>
</dbReference>
<dbReference type="eggNOG" id="KOG3575">
    <property type="taxonomic scope" value="Eukaryota"/>
</dbReference>
<dbReference type="HOGENOM" id="CLU_007368_3_3_1"/>
<dbReference type="InParanoid" id="O17611"/>
<dbReference type="OMA" id="DIAMAWQ"/>
<dbReference type="OrthoDB" id="5798272at2759"/>
<dbReference type="PhylomeDB" id="O17611"/>
<dbReference type="Reactome" id="R-CEL-383280">
    <property type="pathway name" value="Nuclear Receptor transcription pathway"/>
</dbReference>
<dbReference type="PRO" id="PR:O17611"/>
<dbReference type="Proteomes" id="UP000001940">
    <property type="component" value="Chromosome IV"/>
</dbReference>
<dbReference type="Bgee" id="WBGene00003690">
    <property type="expression patterns" value="Expressed in pharyngeal muscle cell (C elegans) and 4 other cell types or tissues"/>
</dbReference>
<dbReference type="GO" id="GO:0005634">
    <property type="term" value="C:nucleus"/>
    <property type="evidence" value="ECO:0007669"/>
    <property type="project" value="UniProtKB-SubCell"/>
</dbReference>
<dbReference type="GO" id="GO:0004879">
    <property type="term" value="F:nuclear receptor activity"/>
    <property type="evidence" value="ECO:0000318"/>
    <property type="project" value="GO_Central"/>
</dbReference>
<dbReference type="GO" id="GO:0000978">
    <property type="term" value="F:RNA polymerase II cis-regulatory region sequence-specific DNA binding"/>
    <property type="evidence" value="ECO:0000318"/>
    <property type="project" value="GO_Central"/>
</dbReference>
<dbReference type="GO" id="GO:0008270">
    <property type="term" value="F:zinc ion binding"/>
    <property type="evidence" value="ECO:0007669"/>
    <property type="project" value="UniProtKB-KW"/>
</dbReference>
<dbReference type="GO" id="GO:0030154">
    <property type="term" value="P:cell differentiation"/>
    <property type="evidence" value="ECO:0000318"/>
    <property type="project" value="GO_Central"/>
</dbReference>
<dbReference type="GO" id="GO:0006357">
    <property type="term" value="P:regulation of transcription by RNA polymerase II"/>
    <property type="evidence" value="ECO:0000318"/>
    <property type="project" value="GO_Central"/>
</dbReference>
<dbReference type="CDD" id="cd06960">
    <property type="entry name" value="NR_DBD_HNF4A"/>
    <property type="match status" value="1"/>
</dbReference>
<dbReference type="FunFam" id="1.10.565.10:FF:000045">
    <property type="entry name" value="Nuclear Hormone Receptor family"/>
    <property type="match status" value="1"/>
</dbReference>
<dbReference type="FunFam" id="3.30.50.10:FF:000030">
    <property type="entry name" value="Nuclear Hormone Receptor family"/>
    <property type="match status" value="1"/>
</dbReference>
<dbReference type="Gene3D" id="3.30.50.10">
    <property type="entry name" value="Erythroid Transcription Factor GATA-1, subunit A"/>
    <property type="match status" value="1"/>
</dbReference>
<dbReference type="Gene3D" id="1.10.565.10">
    <property type="entry name" value="Retinoid X Receptor"/>
    <property type="match status" value="1"/>
</dbReference>
<dbReference type="InterPro" id="IPR052499">
    <property type="entry name" value="C.elegans_NHRs"/>
</dbReference>
<dbReference type="InterPro" id="IPR049636">
    <property type="entry name" value="HNF4-like_DBD"/>
</dbReference>
<dbReference type="InterPro" id="IPR035500">
    <property type="entry name" value="NHR-like_dom_sf"/>
</dbReference>
<dbReference type="InterPro" id="IPR000536">
    <property type="entry name" value="Nucl_hrmn_rcpt_lig-bd"/>
</dbReference>
<dbReference type="InterPro" id="IPR001723">
    <property type="entry name" value="Nuclear_hrmn_rcpt"/>
</dbReference>
<dbReference type="InterPro" id="IPR001628">
    <property type="entry name" value="Znf_hrmn_rcpt"/>
</dbReference>
<dbReference type="InterPro" id="IPR013088">
    <property type="entry name" value="Znf_NHR/GATA"/>
</dbReference>
<dbReference type="PANTHER" id="PTHR47630:SF7">
    <property type="entry name" value="NUCLEAR HORMONE RECEPTOR FAMILY"/>
    <property type="match status" value="1"/>
</dbReference>
<dbReference type="PANTHER" id="PTHR47630">
    <property type="entry name" value="NUCLEAR HORMONE RECEPTOR FAMILY-RELATED-RELATED"/>
    <property type="match status" value="1"/>
</dbReference>
<dbReference type="Pfam" id="PF00104">
    <property type="entry name" value="Hormone_recep"/>
    <property type="match status" value="1"/>
</dbReference>
<dbReference type="Pfam" id="PF00105">
    <property type="entry name" value="zf-C4"/>
    <property type="match status" value="1"/>
</dbReference>
<dbReference type="PRINTS" id="PR00398">
    <property type="entry name" value="STRDHORMONER"/>
</dbReference>
<dbReference type="PRINTS" id="PR00047">
    <property type="entry name" value="STROIDFINGER"/>
</dbReference>
<dbReference type="SMART" id="SM00430">
    <property type="entry name" value="HOLI"/>
    <property type="match status" value="1"/>
</dbReference>
<dbReference type="SMART" id="SM00399">
    <property type="entry name" value="ZnF_C4"/>
    <property type="match status" value="1"/>
</dbReference>
<dbReference type="SUPFAM" id="SSF57716">
    <property type="entry name" value="Glucocorticoid receptor-like (DNA-binding domain)"/>
    <property type="match status" value="1"/>
</dbReference>
<dbReference type="SUPFAM" id="SSF48508">
    <property type="entry name" value="Nuclear receptor ligand-binding domain"/>
    <property type="match status" value="1"/>
</dbReference>
<dbReference type="PROSITE" id="PS51843">
    <property type="entry name" value="NR_LBD"/>
    <property type="match status" value="1"/>
</dbReference>
<dbReference type="PROSITE" id="PS00031">
    <property type="entry name" value="NUCLEAR_REC_DBD_1"/>
    <property type="match status" value="1"/>
</dbReference>
<dbReference type="PROSITE" id="PS51030">
    <property type="entry name" value="NUCLEAR_REC_DBD_2"/>
    <property type="match status" value="1"/>
</dbReference>
<evidence type="ECO:0000255" key="1">
    <source>
        <dbReference type="PROSITE-ProRule" id="PRU00407"/>
    </source>
</evidence>
<evidence type="ECO:0000255" key="2">
    <source>
        <dbReference type="PROSITE-ProRule" id="PRU01189"/>
    </source>
</evidence>
<evidence type="ECO:0000305" key="3"/>
<organism>
    <name type="scientific">Caenorhabditis elegans</name>
    <dbReference type="NCBI Taxonomy" id="6239"/>
    <lineage>
        <taxon>Eukaryota</taxon>
        <taxon>Metazoa</taxon>
        <taxon>Ecdysozoa</taxon>
        <taxon>Nematoda</taxon>
        <taxon>Chromadorea</taxon>
        <taxon>Rhabditida</taxon>
        <taxon>Rhabditina</taxon>
        <taxon>Rhabditomorpha</taxon>
        <taxon>Rhabditoidea</taxon>
        <taxon>Rhabditidae</taxon>
        <taxon>Peloderinae</taxon>
        <taxon>Caenorhabditis</taxon>
    </lineage>
</organism>
<sequence>MNIPFNSVSKIQWRNPSPVSDTSCLVCGDPHGKRHYGAMSCNGCKGFFRRSIWEKRTYKCSFNNECIIEFKYRNRCRACRLKRCLHVGMDANAVRSERTRKIKTEIDGDVKLEIKEEPADSEDADDECPLDIKPDIAMAWQTKEIIAHMLYEEDRVLNWEEPYNKLRYYTMDSEVLQAIKDPSQVCARTKINWNSHSRPLITIEALRFNWCRTFTLTIDWFETLPEYRALIDDDKELLVKFSLMPVGWLWYAYKSYEYRCDGIVFVDGSWFPRDKTIQQQVCPTCVLYYGRITESFMADVVNSMKELEMDETEMVLLKAICHLQPDYRLTRRGNDVISTGREKYKRALCEYIRMKSNGFMDASFRLCKLMQILPVVDILGKYEDESALLVSLGETEFNGSGGGLPYDIHASDSHFARKNRRKSDNQYHQQHVPLHIQ</sequence>
<reference key="1">
    <citation type="journal article" date="2005" name="J. Mol. Evol.">
        <title>Explosive lineage-specific expansion of the orphan nuclear receptor HNF4 in nematodes.</title>
        <authorList>
            <person name="Robinson-Rechavi M."/>
            <person name="Maina C.V."/>
            <person name="Gissendanner C.R."/>
            <person name="Laudet V."/>
            <person name="Sluder A."/>
        </authorList>
    </citation>
    <scope>NUCLEOTIDE SEQUENCE [MRNA]</scope>
</reference>
<reference key="2">
    <citation type="journal article" date="1998" name="Science">
        <title>Genome sequence of the nematode C. elegans: a platform for investigating biology.</title>
        <authorList>
            <consortium name="The C. elegans sequencing consortium"/>
        </authorList>
    </citation>
    <scope>NUCLEOTIDE SEQUENCE [LARGE SCALE GENOMIC DNA]</scope>
    <source>
        <strain>Bristol N2</strain>
    </source>
</reference>
<name>NH100_CAEEL</name>